<organism>
    <name type="scientific">Shigella flexneri serotype 5b (strain 8401)</name>
    <dbReference type="NCBI Taxonomy" id="373384"/>
    <lineage>
        <taxon>Bacteria</taxon>
        <taxon>Pseudomonadati</taxon>
        <taxon>Pseudomonadota</taxon>
        <taxon>Gammaproteobacteria</taxon>
        <taxon>Enterobacterales</taxon>
        <taxon>Enterobacteriaceae</taxon>
        <taxon>Shigella</taxon>
    </lineage>
</organism>
<evidence type="ECO:0000255" key="1">
    <source>
        <dbReference type="HAMAP-Rule" id="MF_00517"/>
    </source>
</evidence>
<name>SOTB_SHIF8</name>
<feature type="chain" id="PRO_1000050803" description="Probable sugar efflux transporter">
    <location>
        <begin position="1"/>
        <end position="396"/>
    </location>
</feature>
<feature type="transmembrane region" description="Helical" evidence="1">
    <location>
        <begin position="15"/>
        <end position="35"/>
    </location>
</feature>
<feature type="transmembrane region" description="Helical" evidence="1">
    <location>
        <begin position="50"/>
        <end position="70"/>
    </location>
</feature>
<feature type="transmembrane region" description="Helical" evidence="1">
    <location>
        <begin position="81"/>
        <end position="101"/>
    </location>
</feature>
<feature type="transmembrane region" description="Helical" evidence="1">
    <location>
        <begin position="103"/>
        <end position="123"/>
    </location>
</feature>
<feature type="transmembrane region" description="Helical" evidence="1">
    <location>
        <begin position="136"/>
        <end position="156"/>
    </location>
</feature>
<feature type="transmembrane region" description="Helical" evidence="1">
    <location>
        <begin position="170"/>
        <end position="190"/>
    </location>
</feature>
<feature type="transmembrane region" description="Helical" evidence="1">
    <location>
        <begin position="209"/>
        <end position="229"/>
    </location>
</feature>
<feature type="transmembrane region" description="Helical" evidence="1">
    <location>
        <begin position="246"/>
        <end position="266"/>
    </location>
</feature>
<feature type="transmembrane region" description="Helical" evidence="1">
    <location>
        <begin position="275"/>
        <end position="295"/>
    </location>
</feature>
<feature type="transmembrane region" description="Helical" evidence="1">
    <location>
        <begin position="299"/>
        <end position="319"/>
    </location>
</feature>
<feature type="transmembrane region" description="Helical" evidence="1">
    <location>
        <begin position="333"/>
        <end position="353"/>
    </location>
</feature>
<feature type="transmembrane region" description="Helical" evidence="1">
    <location>
        <begin position="364"/>
        <end position="384"/>
    </location>
</feature>
<dbReference type="EMBL" id="CP000266">
    <property type="protein sequence ID" value="ABF03764.1"/>
    <property type="molecule type" value="Genomic_DNA"/>
</dbReference>
<dbReference type="RefSeq" id="WP_000214841.1">
    <property type="nucleotide sequence ID" value="NC_008258.1"/>
</dbReference>
<dbReference type="SMR" id="Q0T4K1"/>
<dbReference type="KEGG" id="sfv:SFV_1588"/>
<dbReference type="HOGENOM" id="CLU_001265_61_1_6"/>
<dbReference type="Proteomes" id="UP000000659">
    <property type="component" value="Chromosome"/>
</dbReference>
<dbReference type="GO" id="GO:0005886">
    <property type="term" value="C:plasma membrane"/>
    <property type="evidence" value="ECO:0007669"/>
    <property type="project" value="UniProtKB-SubCell"/>
</dbReference>
<dbReference type="GO" id="GO:0015144">
    <property type="term" value="F:carbohydrate transmembrane transporter activity"/>
    <property type="evidence" value="ECO:0007669"/>
    <property type="project" value="UniProtKB-UniRule"/>
</dbReference>
<dbReference type="CDD" id="cd17324">
    <property type="entry name" value="MFS_NepI_like"/>
    <property type="match status" value="1"/>
</dbReference>
<dbReference type="FunFam" id="1.20.1250.20:FF:000079">
    <property type="entry name" value="Probable sugar efflux transporter"/>
    <property type="match status" value="1"/>
</dbReference>
<dbReference type="Gene3D" id="1.20.1250.20">
    <property type="entry name" value="MFS general substrate transporter like domains"/>
    <property type="match status" value="1"/>
</dbReference>
<dbReference type="HAMAP" id="MF_00517">
    <property type="entry name" value="MFS_SotB"/>
    <property type="match status" value="1"/>
</dbReference>
<dbReference type="InterPro" id="IPR011701">
    <property type="entry name" value="MFS"/>
</dbReference>
<dbReference type="InterPro" id="IPR020846">
    <property type="entry name" value="MFS_dom"/>
</dbReference>
<dbReference type="InterPro" id="IPR050189">
    <property type="entry name" value="MFS_Efflux_Transporters"/>
</dbReference>
<dbReference type="InterPro" id="IPR036259">
    <property type="entry name" value="MFS_trans_sf"/>
</dbReference>
<dbReference type="InterPro" id="IPR023495">
    <property type="entry name" value="Sugar_effux_transptr_put"/>
</dbReference>
<dbReference type="NCBIfam" id="NF002921">
    <property type="entry name" value="PRK03545.1"/>
    <property type="match status" value="1"/>
</dbReference>
<dbReference type="PANTHER" id="PTHR43124">
    <property type="entry name" value="PURINE EFFLUX PUMP PBUE"/>
    <property type="match status" value="1"/>
</dbReference>
<dbReference type="PANTHER" id="PTHR43124:SF4">
    <property type="entry name" value="SUGAR EFFLUX TRANSPORTER"/>
    <property type="match status" value="1"/>
</dbReference>
<dbReference type="Pfam" id="PF07690">
    <property type="entry name" value="MFS_1"/>
    <property type="match status" value="1"/>
</dbReference>
<dbReference type="SUPFAM" id="SSF103473">
    <property type="entry name" value="MFS general substrate transporter"/>
    <property type="match status" value="1"/>
</dbReference>
<dbReference type="PROSITE" id="PS50850">
    <property type="entry name" value="MFS"/>
    <property type="match status" value="1"/>
</dbReference>
<keyword id="KW-0997">Cell inner membrane</keyword>
<keyword id="KW-1003">Cell membrane</keyword>
<keyword id="KW-0472">Membrane</keyword>
<keyword id="KW-0762">Sugar transport</keyword>
<keyword id="KW-0812">Transmembrane</keyword>
<keyword id="KW-1133">Transmembrane helix</keyword>
<keyword id="KW-0813">Transport</keyword>
<sequence>MTTYTVSRKVAWLRVVTLAVAAFIFNTTEFVPVGLLSDIAQSFHMQTAQVGIMLTIYAWVVALMSLPFMLMTSQVERRKLLICLFVVFIASHVLSFLSWSFTVLVISRIGVAFAHAIFWSITASLAIRMAPAGKRAQALSLIATGTALAMVLGLPLGRIVGQYFGWRMTFFAIGIGALVTLLCLIKLLPLLPSEHSGSLKSLPLLFRRPALMSIYLLTVVVVTAHYTAYSYIEPFVQNIAGFSANFATALLLLLGGAGIIGSVIFGKLGNQYASALVSTAIALLLVCLALLLPAANSEIHLGVLSIFWGIAMMIIGLGMQVKVLALAPDATDVAMALFSGIFNIGIGAGALVGNQVSLHWSMSMIGYVGAVPAFAALIWSIIIFRRWPVTLEEQTQ</sequence>
<reference key="1">
    <citation type="journal article" date="2006" name="BMC Genomics">
        <title>Complete genome sequence of Shigella flexneri 5b and comparison with Shigella flexneri 2a.</title>
        <authorList>
            <person name="Nie H."/>
            <person name="Yang F."/>
            <person name="Zhang X."/>
            <person name="Yang J."/>
            <person name="Chen L."/>
            <person name="Wang J."/>
            <person name="Xiong Z."/>
            <person name="Peng J."/>
            <person name="Sun L."/>
            <person name="Dong J."/>
            <person name="Xue Y."/>
            <person name="Xu X."/>
            <person name="Chen S."/>
            <person name="Yao Z."/>
            <person name="Shen Y."/>
            <person name="Jin Q."/>
        </authorList>
    </citation>
    <scope>NUCLEOTIDE SEQUENCE [LARGE SCALE GENOMIC DNA]</scope>
    <source>
        <strain>8401</strain>
    </source>
</reference>
<comment type="function">
    <text evidence="1">Involved in the efflux of sugars. The physiological role may be the reduction of the intracellular concentration of toxic sugars or sugar metabolites.</text>
</comment>
<comment type="subcellular location">
    <subcellularLocation>
        <location evidence="1">Cell inner membrane</location>
        <topology evidence="1">Multi-pass membrane protein</topology>
    </subcellularLocation>
</comment>
<comment type="similarity">
    <text evidence="1">Belongs to the major facilitator superfamily. SotB (TC 2.A.1.2) family.</text>
</comment>
<gene>
    <name evidence="1" type="primary">sotB</name>
    <name type="ordered locus">SFV_1588</name>
</gene>
<protein>
    <recommendedName>
        <fullName evidence="1">Probable sugar efflux transporter</fullName>
    </recommendedName>
</protein>
<accession>Q0T4K1</accession>
<proteinExistence type="inferred from homology"/>